<reference key="1">
    <citation type="journal article" date="2006" name="PLoS Genet.">
        <title>The complete genome sequence and comparative genome analysis of the high pathogenicity Yersinia enterocolitica strain 8081.</title>
        <authorList>
            <person name="Thomson N.R."/>
            <person name="Howard S."/>
            <person name="Wren B.W."/>
            <person name="Holden M.T.G."/>
            <person name="Crossman L."/>
            <person name="Challis G.L."/>
            <person name="Churcher C."/>
            <person name="Mungall K."/>
            <person name="Brooks K."/>
            <person name="Chillingworth T."/>
            <person name="Feltwell T."/>
            <person name="Abdellah Z."/>
            <person name="Hauser H."/>
            <person name="Jagels K."/>
            <person name="Maddison M."/>
            <person name="Moule S."/>
            <person name="Sanders M."/>
            <person name="Whitehead S."/>
            <person name="Quail M.A."/>
            <person name="Dougan G."/>
            <person name="Parkhill J."/>
            <person name="Prentice M.B."/>
        </authorList>
    </citation>
    <scope>NUCLEOTIDE SEQUENCE [LARGE SCALE GENOMIC DNA]</scope>
    <source>
        <strain>NCTC 13174 / 8081</strain>
    </source>
</reference>
<organism>
    <name type="scientific">Yersinia enterocolitica serotype O:8 / biotype 1B (strain NCTC 13174 / 8081)</name>
    <dbReference type="NCBI Taxonomy" id="393305"/>
    <lineage>
        <taxon>Bacteria</taxon>
        <taxon>Pseudomonadati</taxon>
        <taxon>Pseudomonadota</taxon>
        <taxon>Gammaproteobacteria</taxon>
        <taxon>Enterobacterales</taxon>
        <taxon>Yersiniaceae</taxon>
        <taxon>Yersinia</taxon>
    </lineage>
</organism>
<feature type="chain" id="PRO_1000046786" description="UPF0306 protein YE0465">
    <location>
        <begin position="1"/>
        <end position="147"/>
    </location>
</feature>
<name>Y465_YERE8</name>
<proteinExistence type="inferred from homology"/>
<evidence type="ECO:0000255" key="1">
    <source>
        <dbReference type="HAMAP-Rule" id="MF_00764"/>
    </source>
</evidence>
<dbReference type="EMBL" id="AM286415">
    <property type="protein sequence ID" value="CAL10588.1"/>
    <property type="molecule type" value="Genomic_DNA"/>
</dbReference>
<dbReference type="RefSeq" id="YP_001004832.1">
    <property type="nucleotide sequence ID" value="NC_008800.1"/>
</dbReference>
<dbReference type="SMR" id="A1JIZ7"/>
<dbReference type="KEGG" id="yen:YE0465"/>
<dbReference type="PATRIC" id="fig|393305.7.peg.558"/>
<dbReference type="eggNOG" id="COG3787">
    <property type="taxonomic scope" value="Bacteria"/>
</dbReference>
<dbReference type="HOGENOM" id="CLU_105087_3_0_6"/>
<dbReference type="OrthoDB" id="8447155at2"/>
<dbReference type="Proteomes" id="UP000000642">
    <property type="component" value="Chromosome"/>
</dbReference>
<dbReference type="Gene3D" id="2.30.110.10">
    <property type="entry name" value="Electron Transport, Fmn-binding Protein, Chain A"/>
    <property type="match status" value="1"/>
</dbReference>
<dbReference type="HAMAP" id="MF_00764">
    <property type="entry name" value="UPF0306"/>
    <property type="match status" value="1"/>
</dbReference>
<dbReference type="InterPro" id="IPR012349">
    <property type="entry name" value="Split_barrel_FMN-bd"/>
</dbReference>
<dbReference type="InterPro" id="IPR011194">
    <property type="entry name" value="UPF0306"/>
</dbReference>
<dbReference type="NCBIfam" id="NF002900">
    <property type="entry name" value="PRK03467.1"/>
    <property type="match status" value="1"/>
</dbReference>
<dbReference type="PIRSF" id="PIRSF009554">
    <property type="entry name" value="UCP009554"/>
    <property type="match status" value="1"/>
</dbReference>
<dbReference type="SUPFAM" id="SSF50475">
    <property type="entry name" value="FMN-binding split barrel"/>
    <property type="match status" value="1"/>
</dbReference>
<gene>
    <name type="ordered locus">YE0465</name>
</gene>
<comment type="similarity">
    <text evidence="1">Belongs to the UPF0306 family.</text>
</comment>
<sequence>MNNPDDLIVITRFLRQQHVLTLCAGSGMDMWCANCFYVFDEAKMALYLMTEKHTRHGELMQINPQVVGTIATQPRTVALIKGIQYRGEITELKDDAELIARQHYCRRFPVAKVVSAPLWQLNLLEIKMTNNTLDFGKKLYWSRLESQ</sequence>
<protein>
    <recommendedName>
        <fullName evidence="1">UPF0306 protein YE0465</fullName>
    </recommendedName>
</protein>
<accession>A1JIZ7</accession>